<sequence>MRFDVVTLFPAIFDGYLTQSLLDKAIVRGLVEIQRHNLRDWAEDTPHRKVDDRPFGGGPGMLLQVEPTVTCVRDVDAMADVPARKILLTPQGRRLDQRLAEDLATSDRIMLMCGRYEGFDQRVLDILQPEEISIGDFVLNGGEVAAMTIIDAVVRLLPGVLGDEQSSLDDSFSRGNRMLEFPQYTRPREFEGHTVPDVLLSGDHAAIAAWRAEQSRARTIDRRRDLLPEHSKNNPEQTNKLS</sequence>
<name>TRMD_RHOBA</name>
<accession>Q7TTY8</accession>
<reference key="1">
    <citation type="journal article" date="2003" name="Proc. Natl. Acad. Sci. U.S.A.">
        <title>Complete genome sequence of the marine planctomycete Pirellula sp. strain 1.</title>
        <authorList>
            <person name="Gloeckner F.O."/>
            <person name="Kube M."/>
            <person name="Bauer M."/>
            <person name="Teeling H."/>
            <person name="Lombardot T."/>
            <person name="Ludwig W."/>
            <person name="Gade D."/>
            <person name="Beck A."/>
            <person name="Borzym K."/>
            <person name="Heitmann K."/>
            <person name="Rabus R."/>
            <person name="Schlesner H."/>
            <person name="Amann R."/>
            <person name="Reinhardt R."/>
        </authorList>
    </citation>
    <scope>NUCLEOTIDE SEQUENCE [LARGE SCALE GENOMIC DNA]</scope>
    <source>
        <strain>DSM 10527 / NCIMB 13988 / SH1</strain>
    </source>
</reference>
<evidence type="ECO:0000255" key="1">
    <source>
        <dbReference type="HAMAP-Rule" id="MF_00605"/>
    </source>
</evidence>
<evidence type="ECO:0000256" key="2">
    <source>
        <dbReference type="SAM" id="MobiDB-lite"/>
    </source>
</evidence>
<protein>
    <recommendedName>
        <fullName evidence="1">tRNA (guanine-N(1)-)-methyltransferase</fullName>
        <ecNumber evidence="1">2.1.1.228</ecNumber>
    </recommendedName>
    <alternativeName>
        <fullName evidence="1">M1G-methyltransferase</fullName>
    </alternativeName>
    <alternativeName>
        <fullName evidence="1">tRNA [GM37] methyltransferase</fullName>
    </alternativeName>
</protein>
<keyword id="KW-0963">Cytoplasm</keyword>
<keyword id="KW-0489">Methyltransferase</keyword>
<keyword id="KW-1185">Reference proteome</keyword>
<keyword id="KW-0949">S-adenosyl-L-methionine</keyword>
<keyword id="KW-0808">Transferase</keyword>
<keyword id="KW-0819">tRNA processing</keyword>
<proteinExistence type="inferred from homology"/>
<gene>
    <name evidence="1" type="primary">trmD</name>
    <name type="ordered locus">RB12823</name>
</gene>
<organism>
    <name type="scientific">Rhodopirellula baltica (strain DSM 10527 / NCIMB 13988 / SH1)</name>
    <dbReference type="NCBI Taxonomy" id="243090"/>
    <lineage>
        <taxon>Bacteria</taxon>
        <taxon>Pseudomonadati</taxon>
        <taxon>Planctomycetota</taxon>
        <taxon>Planctomycetia</taxon>
        <taxon>Pirellulales</taxon>
        <taxon>Pirellulaceae</taxon>
        <taxon>Rhodopirellula</taxon>
    </lineage>
</organism>
<feature type="chain" id="PRO_0000060441" description="tRNA (guanine-N(1)-)-methyltransferase">
    <location>
        <begin position="1"/>
        <end position="242"/>
    </location>
</feature>
<feature type="region of interest" description="Disordered" evidence="2">
    <location>
        <begin position="223"/>
        <end position="242"/>
    </location>
</feature>
<feature type="compositionally biased region" description="Basic and acidic residues" evidence="2">
    <location>
        <begin position="223"/>
        <end position="233"/>
    </location>
</feature>
<feature type="binding site" evidence="1">
    <location>
        <position position="114"/>
    </location>
    <ligand>
        <name>S-adenosyl-L-methionine</name>
        <dbReference type="ChEBI" id="CHEBI:59789"/>
    </ligand>
</feature>
<feature type="binding site" evidence="1">
    <location>
        <begin position="134"/>
        <end position="139"/>
    </location>
    <ligand>
        <name>S-adenosyl-L-methionine</name>
        <dbReference type="ChEBI" id="CHEBI:59789"/>
    </ligand>
</feature>
<comment type="function">
    <text evidence="1">Specifically methylates guanosine-37 in various tRNAs.</text>
</comment>
<comment type="catalytic activity">
    <reaction evidence="1">
        <text>guanosine(37) in tRNA + S-adenosyl-L-methionine = N(1)-methylguanosine(37) in tRNA + S-adenosyl-L-homocysteine + H(+)</text>
        <dbReference type="Rhea" id="RHEA:36899"/>
        <dbReference type="Rhea" id="RHEA-COMP:10145"/>
        <dbReference type="Rhea" id="RHEA-COMP:10147"/>
        <dbReference type="ChEBI" id="CHEBI:15378"/>
        <dbReference type="ChEBI" id="CHEBI:57856"/>
        <dbReference type="ChEBI" id="CHEBI:59789"/>
        <dbReference type="ChEBI" id="CHEBI:73542"/>
        <dbReference type="ChEBI" id="CHEBI:74269"/>
        <dbReference type="EC" id="2.1.1.228"/>
    </reaction>
</comment>
<comment type="subunit">
    <text evidence="1">Homodimer.</text>
</comment>
<comment type="subcellular location">
    <subcellularLocation>
        <location evidence="1">Cytoplasm</location>
    </subcellularLocation>
</comment>
<comment type="similarity">
    <text evidence="1">Belongs to the RNA methyltransferase TrmD family.</text>
</comment>
<dbReference type="EC" id="2.1.1.228" evidence="1"/>
<dbReference type="EMBL" id="BX294155">
    <property type="protein sequence ID" value="CAD77802.1"/>
    <property type="molecule type" value="Genomic_DNA"/>
</dbReference>
<dbReference type="RefSeq" id="NP_870725.1">
    <property type="nucleotide sequence ID" value="NC_005027.1"/>
</dbReference>
<dbReference type="RefSeq" id="WP_011123923.1">
    <property type="nucleotide sequence ID" value="NC_005027.1"/>
</dbReference>
<dbReference type="SMR" id="Q7TTY8"/>
<dbReference type="FunCoup" id="Q7TTY8">
    <property type="interactions" value="456"/>
</dbReference>
<dbReference type="STRING" id="243090.RB12823"/>
<dbReference type="EnsemblBacteria" id="CAD77802">
    <property type="protein sequence ID" value="CAD77802"/>
    <property type="gene ID" value="RB12823"/>
</dbReference>
<dbReference type="KEGG" id="rba:RB12823"/>
<dbReference type="PATRIC" id="fig|243090.15.peg.6211"/>
<dbReference type="eggNOG" id="COG0336">
    <property type="taxonomic scope" value="Bacteria"/>
</dbReference>
<dbReference type="HOGENOM" id="CLU_047363_0_1_0"/>
<dbReference type="InParanoid" id="Q7TTY8"/>
<dbReference type="OrthoDB" id="9807416at2"/>
<dbReference type="Proteomes" id="UP000001025">
    <property type="component" value="Chromosome"/>
</dbReference>
<dbReference type="GO" id="GO:0005829">
    <property type="term" value="C:cytosol"/>
    <property type="evidence" value="ECO:0000318"/>
    <property type="project" value="GO_Central"/>
</dbReference>
<dbReference type="GO" id="GO:0052906">
    <property type="term" value="F:tRNA (guanine(37)-N1)-methyltransferase activity"/>
    <property type="evidence" value="ECO:0000318"/>
    <property type="project" value="GO_Central"/>
</dbReference>
<dbReference type="GO" id="GO:0002939">
    <property type="term" value="P:tRNA N1-guanine methylation"/>
    <property type="evidence" value="ECO:0000318"/>
    <property type="project" value="GO_Central"/>
</dbReference>
<dbReference type="CDD" id="cd18080">
    <property type="entry name" value="TrmD-like"/>
    <property type="match status" value="1"/>
</dbReference>
<dbReference type="FunFam" id="3.40.1280.10:FF:000001">
    <property type="entry name" value="tRNA (guanine-N(1)-)-methyltransferase"/>
    <property type="match status" value="1"/>
</dbReference>
<dbReference type="Gene3D" id="3.40.1280.10">
    <property type="match status" value="1"/>
</dbReference>
<dbReference type="Gene3D" id="1.10.1270.20">
    <property type="entry name" value="tRNA(m1g37)methyltransferase, domain 2"/>
    <property type="match status" value="1"/>
</dbReference>
<dbReference type="HAMAP" id="MF_00605">
    <property type="entry name" value="TrmD"/>
    <property type="match status" value="1"/>
</dbReference>
<dbReference type="InterPro" id="IPR029028">
    <property type="entry name" value="Alpha/beta_knot_MTases"/>
</dbReference>
<dbReference type="InterPro" id="IPR023148">
    <property type="entry name" value="tRNA_m1G_MeTrfase_C_sf"/>
</dbReference>
<dbReference type="InterPro" id="IPR002649">
    <property type="entry name" value="tRNA_m1G_MeTrfase_TrmD"/>
</dbReference>
<dbReference type="InterPro" id="IPR029026">
    <property type="entry name" value="tRNA_m1G_MTases_N"/>
</dbReference>
<dbReference type="InterPro" id="IPR016009">
    <property type="entry name" value="tRNA_MeTrfase_TRMD/TRM10"/>
</dbReference>
<dbReference type="NCBIfam" id="NF000648">
    <property type="entry name" value="PRK00026.1"/>
    <property type="match status" value="1"/>
</dbReference>
<dbReference type="NCBIfam" id="TIGR00088">
    <property type="entry name" value="trmD"/>
    <property type="match status" value="1"/>
</dbReference>
<dbReference type="PANTHER" id="PTHR46417">
    <property type="entry name" value="TRNA (GUANINE-N(1)-)-METHYLTRANSFERASE"/>
    <property type="match status" value="1"/>
</dbReference>
<dbReference type="PANTHER" id="PTHR46417:SF1">
    <property type="entry name" value="TRNA (GUANINE-N(1)-)-METHYLTRANSFERASE"/>
    <property type="match status" value="1"/>
</dbReference>
<dbReference type="Pfam" id="PF01746">
    <property type="entry name" value="tRNA_m1G_MT"/>
    <property type="match status" value="1"/>
</dbReference>
<dbReference type="PIRSF" id="PIRSF000386">
    <property type="entry name" value="tRNA_mtase"/>
    <property type="match status" value="1"/>
</dbReference>
<dbReference type="SUPFAM" id="SSF75217">
    <property type="entry name" value="alpha/beta knot"/>
    <property type="match status" value="1"/>
</dbReference>